<feature type="chain" id="PRO_0000151748" description="GTP cyclohydrolase-2">
    <location>
        <begin position="1"/>
        <end position="199"/>
    </location>
</feature>
<feature type="active site" description="Proton acceptor" evidence="1">
    <location>
        <position position="126"/>
    </location>
</feature>
<feature type="active site" description="Nucleophile" evidence="1">
    <location>
        <position position="128"/>
    </location>
</feature>
<feature type="binding site" evidence="1">
    <location>
        <begin position="49"/>
        <end position="53"/>
    </location>
    <ligand>
        <name>GTP</name>
        <dbReference type="ChEBI" id="CHEBI:37565"/>
    </ligand>
</feature>
<feature type="binding site" evidence="1">
    <location>
        <position position="54"/>
    </location>
    <ligand>
        <name>Zn(2+)</name>
        <dbReference type="ChEBI" id="CHEBI:29105"/>
        <note>catalytic</note>
    </ligand>
</feature>
<feature type="binding site" evidence="1">
    <location>
        <position position="65"/>
    </location>
    <ligand>
        <name>Zn(2+)</name>
        <dbReference type="ChEBI" id="CHEBI:29105"/>
        <note>catalytic</note>
    </ligand>
</feature>
<feature type="binding site" evidence="1">
    <location>
        <position position="67"/>
    </location>
    <ligand>
        <name>Zn(2+)</name>
        <dbReference type="ChEBI" id="CHEBI:29105"/>
        <note>catalytic</note>
    </ligand>
</feature>
<feature type="binding site" evidence="1">
    <location>
        <position position="70"/>
    </location>
    <ligand>
        <name>GTP</name>
        <dbReference type="ChEBI" id="CHEBI:37565"/>
    </ligand>
</feature>
<feature type="binding site" evidence="1">
    <location>
        <begin position="92"/>
        <end position="94"/>
    </location>
    <ligand>
        <name>GTP</name>
        <dbReference type="ChEBI" id="CHEBI:37565"/>
    </ligand>
</feature>
<feature type="binding site" evidence="1">
    <location>
        <position position="114"/>
    </location>
    <ligand>
        <name>GTP</name>
        <dbReference type="ChEBI" id="CHEBI:37565"/>
    </ligand>
</feature>
<feature type="binding site" evidence="1">
    <location>
        <position position="149"/>
    </location>
    <ligand>
        <name>GTP</name>
        <dbReference type="ChEBI" id="CHEBI:37565"/>
    </ligand>
</feature>
<feature type="binding site" evidence="1">
    <location>
        <position position="154"/>
    </location>
    <ligand>
        <name>GTP</name>
        <dbReference type="ChEBI" id="CHEBI:37565"/>
    </ligand>
</feature>
<gene>
    <name evidence="1" type="primary">ribA</name>
    <name type="ordered locus">Bfl425</name>
</gene>
<accession>Q7VR05</accession>
<reference key="1">
    <citation type="journal article" date="2003" name="Proc. Natl. Acad. Sci. U.S.A.">
        <title>The genome sequence of Blochmannia floridanus: comparative analysis of reduced genomes.</title>
        <authorList>
            <person name="Gil R."/>
            <person name="Silva F.J."/>
            <person name="Zientz E."/>
            <person name="Delmotte F."/>
            <person name="Gonzalez-Candelas F."/>
            <person name="Latorre A."/>
            <person name="Rausell C."/>
            <person name="Kamerbeek J."/>
            <person name="Gadau J."/>
            <person name="Hoelldobler B."/>
            <person name="van Ham R.C.H.J."/>
            <person name="Gross R."/>
            <person name="Moya A."/>
        </authorList>
    </citation>
    <scope>NUCLEOTIDE SEQUENCE [LARGE SCALE GENOMIC DNA]</scope>
</reference>
<protein>
    <recommendedName>
        <fullName evidence="1">GTP cyclohydrolase-2</fullName>
        <ecNumber evidence="1">3.5.4.25</ecNumber>
    </recommendedName>
    <alternativeName>
        <fullName evidence="1">GTP cyclohydrolase II</fullName>
    </alternativeName>
</protein>
<keyword id="KW-0342">GTP-binding</keyword>
<keyword id="KW-0378">Hydrolase</keyword>
<keyword id="KW-0479">Metal-binding</keyword>
<keyword id="KW-0547">Nucleotide-binding</keyword>
<keyword id="KW-1185">Reference proteome</keyword>
<keyword id="KW-0686">Riboflavin biosynthesis</keyword>
<keyword id="KW-0862">Zinc</keyword>
<comment type="function">
    <text evidence="1">Catalyzes the conversion of GTP to 2,5-diamino-6-ribosylamino-4(3H)-pyrimidinone 5'-phosphate (DARP), formate and pyrophosphate.</text>
</comment>
<comment type="catalytic activity">
    <reaction evidence="1">
        <text>GTP + 4 H2O = 2,5-diamino-6-hydroxy-4-(5-phosphoribosylamino)-pyrimidine + formate + 2 phosphate + 3 H(+)</text>
        <dbReference type="Rhea" id="RHEA:23704"/>
        <dbReference type="ChEBI" id="CHEBI:15377"/>
        <dbReference type="ChEBI" id="CHEBI:15378"/>
        <dbReference type="ChEBI" id="CHEBI:15740"/>
        <dbReference type="ChEBI" id="CHEBI:37565"/>
        <dbReference type="ChEBI" id="CHEBI:43474"/>
        <dbReference type="ChEBI" id="CHEBI:58614"/>
        <dbReference type="EC" id="3.5.4.25"/>
    </reaction>
</comment>
<comment type="cofactor">
    <cofactor evidence="1">
        <name>Zn(2+)</name>
        <dbReference type="ChEBI" id="CHEBI:29105"/>
    </cofactor>
    <text evidence="1">Binds 1 zinc ion per subunit.</text>
</comment>
<comment type="pathway">
    <text evidence="1">Cofactor biosynthesis; riboflavin biosynthesis; 5-amino-6-(D-ribitylamino)uracil from GTP: step 1/4.</text>
</comment>
<comment type="subunit">
    <text evidence="1">Homodimer.</text>
</comment>
<comment type="similarity">
    <text evidence="1">Belongs to the GTP cyclohydrolase II family.</text>
</comment>
<proteinExistence type="inferred from homology"/>
<organism>
    <name type="scientific">Blochmanniella floridana</name>
    <dbReference type="NCBI Taxonomy" id="203907"/>
    <lineage>
        <taxon>Bacteria</taxon>
        <taxon>Pseudomonadati</taxon>
        <taxon>Pseudomonadota</taxon>
        <taxon>Gammaproteobacteria</taxon>
        <taxon>Enterobacterales</taxon>
        <taxon>Enterobacteriaceae</taxon>
        <taxon>ant endosymbionts</taxon>
        <taxon>Candidatus Blochmanniella</taxon>
    </lineage>
</organism>
<evidence type="ECO:0000255" key="1">
    <source>
        <dbReference type="HAMAP-Rule" id="MF_00179"/>
    </source>
</evidence>
<dbReference type="EC" id="3.5.4.25" evidence="1"/>
<dbReference type="EMBL" id="BX248583">
    <property type="protein sequence ID" value="CAD83487.1"/>
    <property type="molecule type" value="Genomic_DNA"/>
</dbReference>
<dbReference type="SMR" id="Q7VR05"/>
<dbReference type="STRING" id="203907.Bfl425"/>
<dbReference type="KEGG" id="bfl:Bfl425"/>
<dbReference type="eggNOG" id="COG0807">
    <property type="taxonomic scope" value="Bacteria"/>
</dbReference>
<dbReference type="HOGENOM" id="CLU_020273_2_1_6"/>
<dbReference type="OrthoDB" id="9793111at2"/>
<dbReference type="UniPathway" id="UPA00275">
    <property type="reaction ID" value="UER00400"/>
</dbReference>
<dbReference type="Proteomes" id="UP000002192">
    <property type="component" value="Chromosome"/>
</dbReference>
<dbReference type="GO" id="GO:0005829">
    <property type="term" value="C:cytosol"/>
    <property type="evidence" value="ECO:0007669"/>
    <property type="project" value="TreeGrafter"/>
</dbReference>
<dbReference type="GO" id="GO:0005525">
    <property type="term" value="F:GTP binding"/>
    <property type="evidence" value="ECO:0007669"/>
    <property type="project" value="UniProtKB-KW"/>
</dbReference>
<dbReference type="GO" id="GO:0003935">
    <property type="term" value="F:GTP cyclohydrolase II activity"/>
    <property type="evidence" value="ECO:0007669"/>
    <property type="project" value="UniProtKB-UniRule"/>
</dbReference>
<dbReference type="GO" id="GO:0008270">
    <property type="term" value="F:zinc ion binding"/>
    <property type="evidence" value="ECO:0007669"/>
    <property type="project" value="UniProtKB-UniRule"/>
</dbReference>
<dbReference type="GO" id="GO:0009231">
    <property type="term" value="P:riboflavin biosynthetic process"/>
    <property type="evidence" value="ECO:0007669"/>
    <property type="project" value="UniProtKB-UniRule"/>
</dbReference>
<dbReference type="CDD" id="cd00641">
    <property type="entry name" value="GTP_cyclohydro2"/>
    <property type="match status" value="1"/>
</dbReference>
<dbReference type="FunFam" id="3.40.50.10990:FF:000002">
    <property type="entry name" value="GTP cyclohydrolase-2"/>
    <property type="match status" value="1"/>
</dbReference>
<dbReference type="Gene3D" id="3.40.50.10990">
    <property type="entry name" value="GTP cyclohydrolase II"/>
    <property type="match status" value="1"/>
</dbReference>
<dbReference type="HAMAP" id="MF_00179">
    <property type="entry name" value="RibA"/>
    <property type="match status" value="1"/>
</dbReference>
<dbReference type="InterPro" id="IPR032677">
    <property type="entry name" value="GTP_cyclohydro_II"/>
</dbReference>
<dbReference type="InterPro" id="IPR000926">
    <property type="entry name" value="RibA"/>
</dbReference>
<dbReference type="InterPro" id="IPR036144">
    <property type="entry name" value="RibA-like_sf"/>
</dbReference>
<dbReference type="NCBIfam" id="NF001591">
    <property type="entry name" value="PRK00393.1"/>
    <property type="match status" value="1"/>
</dbReference>
<dbReference type="NCBIfam" id="TIGR00505">
    <property type="entry name" value="ribA"/>
    <property type="match status" value="1"/>
</dbReference>
<dbReference type="PANTHER" id="PTHR21327:SF18">
    <property type="entry name" value="3,4-DIHYDROXY-2-BUTANONE 4-PHOSPHATE SYNTHASE"/>
    <property type="match status" value="1"/>
</dbReference>
<dbReference type="PANTHER" id="PTHR21327">
    <property type="entry name" value="GTP CYCLOHYDROLASE II-RELATED"/>
    <property type="match status" value="1"/>
</dbReference>
<dbReference type="Pfam" id="PF00925">
    <property type="entry name" value="GTP_cyclohydro2"/>
    <property type="match status" value="1"/>
</dbReference>
<dbReference type="SUPFAM" id="SSF142695">
    <property type="entry name" value="RibA-like"/>
    <property type="match status" value="1"/>
</dbReference>
<sequence length="199" mass="22473">MQLKRVAEAKLPTFWGDFLIIGFKENQTEHNHIALTYGDLTGSNPVLTRIHSECLTGDALFSSRCDCGIQLSTALRYITEEGQGILIYHRQEGRNIGLLNKIRAYSLQDHGADTVEANQCLGFNADERDFTVCADILKLLNIQTIRLLTNNPQKIEILNKSHIIVTERVPLIVGRNPKNSKYLDTKALKLGHLFSSYYK</sequence>
<name>RIBA_BLOFL</name>